<proteinExistence type="inferred from homology"/>
<comment type="function">
    <text evidence="2">Forms part of the ribosomal stalk which helps the ribosome interact with GTP-bound translation factors.</text>
</comment>
<comment type="subunit">
    <text evidence="2">Part of the ribosomal stalk of the 50S ribosomal subunit. Interacts with L10 and the large rRNA to form the base of the stalk. L10 forms an elongated spine to which L12 dimers bind in a sequential fashion forming a multimeric L10(L12)X complex.</text>
</comment>
<comment type="PTM">
    <text evidence="2">One or more lysine residues are methylated.</text>
</comment>
<comment type="similarity">
    <text evidence="2">Belongs to the universal ribosomal protein uL11 family.</text>
</comment>
<organism>
    <name type="scientific">Escherichia coli (strain UTI89 / UPEC)</name>
    <dbReference type="NCBI Taxonomy" id="364106"/>
    <lineage>
        <taxon>Bacteria</taxon>
        <taxon>Pseudomonadati</taxon>
        <taxon>Pseudomonadota</taxon>
        <taxon>Gammaproteobacteria</taxon>
        <taxon>Enterobacterales</taxon>
        <taxon>Enterobacteriaceae</taxon>
        <taxon>Escherichia</taxon>
    </lineage>
</organism>
<keyword id="KW-0488">Methylation</keyword>
<keyword id="KW-0687">Ribonucleoprotein</keyword>
<keyword id="KW-0689">Ribosomal protein</keyword>
<keyword id="KW-0694">RNA-binding</keyword>
<keyword id="KW-0699">rRNA-binding</keyword>
<dbReference type="EMBL" id="CP000243">
    <property type="protein sequence ID" value="ABE09267.1"/>
    <property type="molecule type" value="Genomic_DNA"/>
</dbReference>
<dbReference type="RefSeq" id="WP_001085926.1">
    <property type="nucleotide sequence ID" value="NZ_CP064825.1"/>
</dbReference>
<dbReference type="SMR" id="Q1R5U7"/>
<dbReference type="GeneID" id="93777911"/>
<dbReference type="KEGG" id="eci:UTI89_C3838"/>
<dbReference type="HOGENOM" id="CLU_074237_2_0_6"/>
<dbReference type="Proteomes" id="UP000001952">
    <property type="component" value="Chromosome"/>
</dbReference>
<dbReference type="GO" id="GO:0022625">
    <property type="term" value="C:cytosolic large ribosomal subunit"/>
    <property type="evidence" value="ECO:0007669"/>
    <property type="project" value="TreeGrafter"/>
</dbReference>
<dbReference type="GO" id="GO:0070180">
    <property type="term" value="F:large ribosomal subunit rRNA binding"/>
    <property type="evidence" value="ECO:0007669"/>
    <property type="project" value="UniProtKB-UniRule"/>
</dbReference>
<dbReference type="GO" id="GO:0003735">
    <property type="term" value="F:structural constituent of ribosome"/>
    <property type="evidence" value="ECO:0007669"/>
    <property type="project" value="InterPro"/>
</dbReference>
<dbReference type="GO" id="GO:0006412">
    <property type="term" value="P:translation"/>
    <property type="evidence" value="ECO:0007669"/>
    <property type="project" value="UniProtKB-UniRule"/>
</dbReference>
<dbReference type="CDD" id="cd00349">
    <property type="entry name" value="Ribosomal_L11"/>
    <property type="match status" value="1"/>
</dbReference>
<dbReference type="FunFam" id="1.10.10.250:FF:000001">
    <property type="entry name" value="50S ribosomal protein L11"/>
    <property type="match status" value="1"/>
</dbReference>
<dbReference type="FunFam" id="3.30.1550.10:FF:000001">
    <property type="entry name" value="50S ribosomal protein L11"/>
    <property type="match status" value="1"/>
</dbReference>
<dbReference type="Gene3D" id="1.10.10.250">
    <property type="entry name" value="Ribosomal protein L11, C-terminal domain"/>
    <property type="match status" value="1"/>
</dbReference>
<dbReference type="Gene3D" id="3.30.1550.10">
    <property type="entry name" value="Ribosomal protein L11/L12, N-terminal domain"/>
    <property type="match status" value="1"/>
</dbReference>
<dbReference type="HAMAP" id="MF_00736">
    <property type="entry name" value="Ribosomal_uL11"/>
    <property type="match status" value="1"/>
</dbReference>
<dbReference type="InterPro" id="IPR000911">
    <property type="entry name" value="Ribosomal_uL11"/>
</dbReference>
<dbReference type="InterPro" id="IPR006519">
    <property type="entry name" value="Ribosomal_uL11_bac-typ"/>
</dbReference>
<dbReference type="InterPro" id="IPR020783">
    <property type="entry name" value="Ribosomal_uL11_C"/>
</dbReference>
<dbReference type="InterPro" id="IPR036769">
    <property type="entry name" value="Ribosomal_uL11_C_sf"/>
</dbReference>
<dbReference type="InterPro" id="IPR020785">
    <property type="entry name" value="Ribosomal_uL11_CS"/>
</dbReference>
<dbReference type="InterPro" id="IPR020784">
    <property type="entry name" value="Ribosomal_uL11_N"/>
</dbReference>
<dbReference type="InterPro" id="IPR036796">
    <property type="entry name" value="Ribosomal_uL11_N_sf"/>
</dbReference>
<dbReference type="NCBIfam" id="TIGR01632">
    <property type="entry name" value="L11_bact"/>
    <property type="match status" value="1"/>
</dbReference>
<dbReference type="PANTHER" id="PTHR11661">
    <property type="entry name" value="60S RIBOSOMAL PROTEIN L12"/>
    <property type="match status" value="1"/>
</dbReference>
<dbReference type="PANTHER" id="PTHR11661:SF1">
    <property type="entry name" value="LARGE RIBOSOMAL SUBUNIT PROTEIN UL11M"/>
    <property type="match status" value="1"/>
</dbReference>
<dbReference type="Pfam" id="PF00298">
    <property type="entry name" value="Ribosomal_L11"/>
    <property type="match status" value="1"/>
</dbReference>
<dbReference type="Pfam" id="PF03946">
    <property type="entry name" value="Ribosomal_L11_N"/>
    <property type="match status" value="1"/>
</dbReference>
<dbReference type="SMART" id="SM00649">
    <property type="entry name" value="RL11"/>
    <property type="match status" value="1"/>
</dbReference>
<dbReference type="SUPFAM" id="SSF54747">
    <property type="entry name" value="Ribosomal L11/L12e N-terminal domain"/>
    <property type="match status" value="1"/>
</dbReference>
<dbReference type="SUPFAM" id="SSF46906">
    <property type="entry name" value="Ribosomal protein L11, C-terminal domain"/>
    <property type="match status" value="1"/>
</dbReference>
<dbReference type="PROSITE" id="PS00359">
    <property type="entry name" value="RIBOSOMAL_L11"/>
    <property type="match status" value="1"/>
</dbReference>
<gene>
    <name evidence="2" type="primary">rplK</name>
    <name type="ordered locus">UTI89_C3838</name>
</gene>
<evidence type="ECO:0000250" key="1"/>
<evidence type="ECO:0000255" key="2">
    <source>
        <dbReference type="HAMAP-Rule" id="MF_00736"/>
    </source>
</evidence>
<evidence type="ECO:0000305" key="3"/>
<name>RL11_ECOUT</name>
<reference key="1">
    <citation type="journal article" date="2006" name="Proc. Natl. Acad. Sci. U.S.A.">
        <title>Identification of genes subject to positive selection in uropathogenic strains of Escherichia coli: a comparative genomics approach.</title>
        <authorList>
            <person name="Chen S.L."/>
            <person name="Hung C.-S."/>
            <person name="Xu J."/>
            <person name="Reigstad C.S."/>
            <person name="Magrini V."/>
            <person name="Sabo A."/>
            <person name="Blasiar D."/>
            <person name="Bieri T."/>
            <person name="Meyer R.R."/>
            <person name="Ozersky P."/>
            <person name="Armstrong J.R."/>
            <person name="Fulton R.S."/>
            <person name="Latreille J.P."/>
            <person name="Spieth J."/>
            <person name="Hooton T.M."/>
            <person name="Mardis E.R."/>
            <person name="Hultgren S.J."/>
            <person name="Gordon J.I."/>
        </authorList>
    </citation>
    <scope>NUCLEOTIDE SEQUENCE [LARGE SCALE GENOMIC DNA]</scope>
    <source>
        <strain>UTI89 / UPEC</strain>
    </source>
</reference>
<feature type="initiator methionine" description="Removed" evidence="1">
    <location>
        <position position="1"/>
    </location>
</feature>
<feature type="chain" id="PRO_0000258152" description="Large ribosomal subunit protein uL11">
    <location>
        <begin position="2"/>
        <end position="142"/>
    </location>
</feature>
<accession>Q1R5U7</accession>
<protein>
    <recommendedName>
        <fullName evidence="2">Large ribosomal subunit protein uL11</fullName>
    </recommendedName>
    <alternativeName>
        <fullName evidence="3">50S ribosomal protein L11</fullName>
    </alternativeName>
</protein>
<sequence length="142" mass="14875">MAKKVQAYVKLQVAAGMANPSPPVGPALGQQGVNIMEFCKAFNAKTDSIEKGLPIPVVITVYADRSFTFVTKTPPAAVLLKKAAGIKSGSGKPNKDKVGKISRAQLQEIAQTKAADMTGADIEAMTRSIEGTARSMGLVVED</sequence>